<dbReference type="EC" id="5.2.1.8" evidence="1"/>
<dbReference type="EMBL" id="BA000028">
    <property type="protein sequence ID" value="BAC14034.1"/>
    <property type="molecule type" value="Genomic_DNA"/>
</dbReference>
<dbReference type="RefSeq" id="WP_011066473.1">
    <property type="nucleotide sequence ID" value="NC_004193.1"/>
</dbReference>
<dbReference type="SMR" id="Q8CXB7"/>
<dbReference type="STRING" id="221109.gene:10734324"/>
<dbReference type="KEGG" id="oih:OB2078"/>
<dbReference type="eggNOG" id="COG0544">
    <property type="taxonomic scope" value="Bacteria"/>
</dbReference>
<dbReference type="HOGENOM" id="CLU_033058_3_2_9"/>
<dbReference type="OrthoDB" id="9767721at2"/>
<dbReference type="PhylomeDB" id="Q8CXB7"/>
<dbReference type="Proteomes" id="UP000000822">
    <property type="component" value="Chromosome"/>
</dbReference>
<dbReference type="GO" id="GO:0005737">
    <property type="term" value="C:cytoplasm"/>
    <property type="evidence" value="ECO:0007669"/>
    <property type="project" value="UniProtKB-SubCell"/>
</dbReference>
<dbReference type="GO" id="GO:0003755">
    <property type="term" value="F:peptidyl-prolyl cis-trans isomerase activity"/>
    <property type="evidence" value="ECO:0007669"/>
    <property type="project" value="UniProtKB-UniRule"/>
</dbReference>
<dbReference type="GO" id="GO:0044183">
    <property type="term" value="F:protein folding chaperone"/>
    <property type="evidence" value="ECO:0007669"/>
    <property type="project" value="TreeGrafter"/>
</dbReference>
<dbReference type="GO" id="GO:0043022">
    <property type="term" value="F:ribosome binding"/>
    <property type="evidence" value="ECO:0007669"/>
    <property type="project" value="TreeGrafter"/>
</dbReference>
<dbReference type="GO" id="GO:0051083">
    <property type="term" value="P:'de novo' cotranslational protein folding"/>
    <property type="evidence" value="ECO:0007669"/>
    <property type="project" value="TreeGrafter"/>
</dbReference>
<dbReference type="GO" id="GO:0051301">
    <property type="term" value="P:cell division"/>
    <property type="evidence" value="ECO:0007669"/>
    <property type="project" value="UniProtKB-KW"/>
</dbReference>
<dbReference type="GO" id="GO:0061077">
    <property type="term" value="P:chaperone-mediated protein folding"/>
    <property type="evidence" value="ECO:0007669"/>
    <property type="project" value="TreeGrafter"/>
</dbReference>
<dbReference type="GO" id="GO:0015031">
    <property type="term" value="P:protein transport"/>
    <property type="evidence" value="ECO:0007669"/>
    <property type="project" value="UniProtKB-UniRule"/>
</dbReference>
<dbReference type="GO" id="GO:0043335">
    <property type="term" value="P:protein unfolding"/>
    <property type="evidence" value="ECO:0007669"/>
    <property type="project" value="TreeGrafter"/>
</dbReference>
<dbReference type="FunFam" id="3.10.50.40:FF:000001">
    <property type="entry name" value="Trigger factor"/>
    <property type="match status" value="1"/>
</dbReference>
<dbReference type="Gene3D" id="3.10.50.40">
    <property type="match status" value="1"/>
</dbReference>
<dbReference type="Gene3D" id="3.30.70.1050">
    <property type="entry name" value="Trigger factor ribosome-binding domain"/>
    <property type="match status" value="1"/>
</dbReference>
<dbReference type="Gene3D" id="1.10.3120.10">
    <property type="entry name" value="Trigger factor, C-terminal domain"/>
    <property type="match status" value="1"/>
</dbReference>
<dbReference type="HAMAP" id="MF_00303">
    <property type="entry name" value="Trigger_factor_Tig"/>
    <property type="match status" value="1"/>
</dbReference>
<dbReference type="InterPro" id="IPR046357">
    <property type="entry name" value="PPIase_dom_sf"/>
</dbReference>
<dbReference type="InterPro" id="IPR001179">
    <property type="entry name" value="PPIase_FKBP_dom"/>
</dbReference>
<dbReference type="InterPro" id="IPR005215">
    <property type="entry name" value="Trig_fac"/>
</dbReference>
<dbReference type="InterPro" id="IPR008880">
    <property type="entry name" value="Trigger_fac_C"/>
</dbReference>
<dbReference type="InterPro" id="IPR037041">
    <property type="entry name" value="Trigger_fac_C_sf"/>
</dbReference>
<dbReference type="InterPro" id="IPR008881">
    <property type="entry name" value="Trigger_fac_ribosome-bd_bac"/>
</dbReference>
<dbReference type="InterPro" id="IPR036611">
    <property type="entry name" value="Trigger_fac_ribosome-bd_sf"/>
</dbReference>
<dbReference type="InterPro" id="IPR027304">
    <property type="entry name" value="Trigger_fact/SurA_dom_sf"/>
</dbReference>
<dbReference type="NCBIfam" id="TIGR00115">
    <property type="entry name" value="tig"/>
    <property type="match status" value="1"/>
</dbReference>
<dbReference type="PANTHER" id="PTHR30560">
    <property type="entry name" value="TRIGGER FACTOR CHAPERONE AND PEPTIDYL-PROLYL CIS/TRANS ISOMERASE"/>
    <property type="match status" value="1"/>
</dbReference>
<dbReference type="PANTHER" id="PTHR30560:SF3">
    <property type="entry name" value="TRIGGER FACTOR-LIKE PROTEIN TIG, CHLOROPLASTIC"/>
    <property type="match status" value="1"/>
</dbReference>
<dbReference type="Pfam" id="PF00254">
    <property type="entry name" value="FKBP_C"/>
    <property type="match status" value="1"/>
</dbReference>
<dbReference type="Pfam" id="PF05698">
    <property type="entry name" value="Trigger_C"/>
    <property type="match status" value="1"/>
</dbReference>
<dbReference type="Pfam" id="PF05697">
    <property type="entry name" value="Trigger_N"/>
    <property type="match status" value="1"/>
</dbReference>
<dbReference type="PIRSF" id="PIRSF003095">
    <property type="entry name" value="Trigger_factor"/>
    <property type="match status" value="1"/>
</dbReference>
<dbReference type="SUPFAM" id="SSF54534">
    <property type="entry name" value="FKBP-like"/>
    <property type="match status" value="1"/>
</dbReference>
<dbReference type="SUPFAM" id="SSF109998">
    <property type="entry name" value="Triger factor/SurA peptide-binding domain-like"/>
    <property type="match status" value="1"/>
</dbReference>
<dbReference type="SUPFAM" id="SSF102735">
    <property type="entry name" value="Trigger factor ribosome-binding domain"/>
    <property type="match status" value="1"/>
</dbReference>
<dbReference type="PROSITE" id="PS50059">
    <property type="entry name" value="FKBP_PPIASE"/>
    <property type="match status" value="1"/>
</dbReference>
<evidence type="ECO:0000255" key="1">
    <source>
        <dbReference type="HAMAP-Rule" id="MF_00303"/>
    </source>
</evidence>
<accession>Q8CXB7</accession>
<name>TIG_OCEIH</name>
<keyword id="KW-0131">Cell cycle</keyword>
<keyword id="KW-0132">Cell division</keyword>
<keyword id="KW-0143">Chaperone</keyword>
<keyword id="KW-0963">Cytoplasm</keyword>
<keyword id="KW-0413">Isomerase</keyword>
<keyword id="KW-1185">Reference proteome</keyword>
<keyword id="KW-0697">Rotamase</keyword>
<protein>
    <recommendedName>
        <fullName evidence="1">Trigger factor</fullName>
        <shortName evidence="1">TF</shortName>
        <ecNumber evidence="1">5.2.1.8</ecNumber>
    </recommendedName>
    <alternativeName>
        <fullName evidence="1">PPIase</fullName>
    </alternativeName>
</protein>
<gene>
    <name evidence="1" type="primary">tig</name>
    <name type="ordered locus">OB2078</name>
</gene>
<comment type="function">
    <text evidence="1">Involved in protein export. Acts as a chaperone by maintaining the newly synthesized protein in an open conformation. Functions as a peptidyl-prolyl cis-trans isomerase.</text>
</comment>
<comment type="catalytic activity">
    <reaction evidence="1">
        <text>[protein]-peptidylproline (omega=180) = [protein]-peptidylproline (omega=0)</text>
        <dbReference type="Rhea" id="RHEA:16237"/>
        <dbReference type="Rhea" id="RHEA-COMP:10747"/>
        <dbReference type="Rhea" id="RHEA-COMP:10748"/>
        <dbReference type="ChEBI" id="CHEBI:83833"/>
        <dbReference type="ChEBI" id="CHEBI:83834"/>
        <dbReference type="EC" id="5.2.1.8"/>
    </reaction>
</comment>
<comment type="subcellular location">
    <subcellularLocation>
        <location>Cytoplasm</location>
    </subcellularLocation>
    <text evidence="1">About half TF is bound to the ribosome near the polypeptide exit tunnel while the other half is free in the cytoplasm.</text>
</comment>
<comment type="domain">
    <text evidence="1">Consists of 3 domains; the N-terminus binds the ribosome, the middle domain has PPIase activity, while the C-terminus has intrinsic chaperone activity on its own.</text>
</comment>
<comment type="similarity">
    <text evidence="1">Belongs to the FKBP-type PPIase family. Tig subfamily.</text>
</comment>
<sequence>MTAKWEKQEGNKGVLTFEVSAEEFEQALDQAFKKVSKDVQIPGFRKGKIPRGIFEKRFGVEALYQDAVDIVLPSAYTKAVEEADIFPIAQPSVDIDQIERGKELIFTAEVEVKPEVKLGEYKGLEVEEESVEVTDEDVEKEIENVRERHAELIVKEEEAIENGDTAVIDFEGFQDGVAFEGGKGENHSLEIGSGQFIPGFEEQLIGKKAGEETEVTVTFPEEYHAEDLAGKEAVFNVKINEVKAKELPELDDEFAKDVDEEVESLDELKKKKRNELETNKKQEVENKKREELIQKASDNVEVDIPEAMVDTEVNQMVREFEQQLQMQGMTLEMYAQFSGQDEDALKEQMREDAAKRVKTNLTLEAISEAEGIKPSEEDIKAELEKMASMYGAEVDQLVQMLGGNTETLENDLKVKAAIDFLAENSKTK</sequence>
<organism>
    <name type="scientific">Oceanobacillus iheyensis (strain DSM 14371 / CIP 107618 / JCM 11309 / KCTC 3954 / HTE831)</name>
    <dbReference type="NCBI Taxonomy" id="221109"/>
    <lineage>
        <taxon>Bacteria</taxon>
        <taxon>Bacillati</taxon>
        <taxon>Bacillota</taxon>
        <taxon>Bacilli</taxon>
        <taxon>Bacillales</taxon>
        <taxon>Bacillaceae</taxon>
        <taxon>Oceanobacillus</taxon>
    </lineage>
</organism>
<reference key="1">
    <citation type="journal article" date="2002" name="Nucleic Acids Res.">
        <title>Genome sequence of Oceanobacillus iheyensis isolated from the Iheya Ridge and its unexpected adaptive capabilities to extreme environments.</title>
        <authorList>
            <person name="Takami H."/>
            <person name="Takaki Y."/>
            <person name="Uchiyama I."/>
        </authorList>
    </citation>
    <scope>NUCLEOTIDE SEQUENCE [LARGE SCALE GENOMIC DNA]</scope>
    <source>
        <strain>DSM 14371 / CIP 107618 / JCM 11309 / KCTC 3954 / HTE831</strain>
    </source>
</reference>
<proteinExistence type="inferred from homology"/>
<feature type="chain" id="PRO_0000179397" description="Trigger factor">
    <location>
        <begin position="1"/>
        <end position="428"/>
    </location>
</feature>
<feature type="domain" description="PPIase FKBP-type" evidence="1">
    <location>
        <begin position="163"/>
        <end position="248"/>
    </location>
</feature>